<organism>
    <name type="scientific">Syntrophus aciditrophicus (strain SB)</name>
    <dbReference type="NCBI Taxonomy" id="56780"/>
    <lineage>
        <taxon>Bacteria</taxon>
        <taxon>Pseudomonadati</taxon>
        <taxon>Thermodesulfobacteriota</taxon>
        <taxon>Syntrophia</taxon>
        <taxon>Syntrophales</taxon>
        <taxon>Syntrophaceae</taxon>
        <taxon>Syntrophus</taxon>
    </lineage>
</organism>
<dbReference type="EC" id="3.1.26.5" evidence="1"/>
<dbReference type="EMBL" id="CP000252">
    <property type="protein sequence ID" value="ABC77021.1"/>
    <property type="molecule type" value="Genomic_DNA"/>
</dbReference>
<dbReference type="RefSeq" id="WP_011417050.1">
    <property type="nucleotide sequence ID" value="NC_007759.1"/>
</dbReference>
<dbReference type="SMR" id="Q2LSG2"/>
<dbReference type="FunCoup" id="Q2LSG2">
    <property type="interactions" value="113"/>
</dbReference>
<dbReference type="STRING" id="56780.SYN_01012"/>
<dbReference type="KEGG" id="sat:SYN_01012"/>
<dbReference type="eggNOG" id="COG0594">
    <property type="taxonomic scope" value="Bacteria"/>
</dbReference>
<dbReference type="HOGENOM" id="CLU_117179_11_0_7"/>
<dbReference type="InParanoid" id="Q2LSG2"/>
<dbReference type="OrthoDB" id="9810867at2"/>
<dbReference type="Proteomes" id="UP000001933">
    <property type="component" value="Chromosome"/>
</dbReference>
<dbReference type="GO" id="GO:0030677">
    <property type="term" value="C:ribonuclease P complex"/>
    <property type="evidence" value="ECO:0007669"/>
    <property type="project" value="TreeGrafter"/>
</dbReference>
<dbReference type="GO" id="GO:0042781">
    <property type="term" value="F:3'-tRNA processing endoribonuclease activity"/>
    <property type="evidence" value="ECO:0007669"/>
    <property type="project" value="TreeGrafter"/>
</dbReference>
<dbReference type="GO" id="GO:0004526">
    <property type="term" value="F:ribonuclease P activity"/>
    <property type="evidence" value="ECO:0007669"/>
    <property type="project" value="UniProtKB-UniRule"/>
</dbReference>
<dbReference type="GO" id="GO:0000049">
    <property type="term" value="F:tRNA binding"/>
    <property type="evidence" value="ECO:0007669"/>
    <property type="project" value="UniProtKB-UniRule"/>
</dbReference>
<dbReference type="GO" id="GO:0001682">
    <property type="term" value="P:tRNA 5'-leader removal"/>
    <property type="evidence" value="ECO:0007669"/>
    <property type="project" value="UniProtKB-UniRule"/>
</dbReference>
<dbReference type="Gene3D" id="3.30.230.10">
    <property type="match status" value="1"/>
</dbReference>
<dbReference type="HAMAP" id="MF_00227">
    <property type="entry name" value="RNase_P"/>
    <property type="match status" value="1"/>
</dbReference>
<dbReference type="InterPro" id="IPR020568">
    <property type="entry name" value="Ribosomal_Su5_D2-typ_SF"/>
</dbReference>
<dbReference type="InterPro" id="IPR014721">
    <property type="entry name" value="Ribsml_uS5_D2-typ_fold_subgr"/>
</dbReference>
<dbReference type="InterPro" id="IPR000100">
    <property type="entry name" value="RNase_P"/>
</dbReference>
<dbReference type="InterPro" id="IPR020539">
    <property type="entry name" value="RNase_P_CS"/>
</dbReference>
<dbReference type="NCBIfam" id="TIGR00188">
    <property type="entry name" value="rnpA"/>
    <property type="match status" value="1"/>
</dbReference>
<dbReference type="PANTHER" id="PTHR33992">
    <property type="entry name" value="RIBONUCLEASE P PROTEIN COMPONENT"/>
    <property type="match status" value="1"/>
</dbReference>
<dbReference type="PANTHER" id="PTHR33992:SF1">
    <property type="entry name" value="RIBONUCLEASE P PROTEIN COMPONENT"/>
    <property type="match status" value="1"/>
</dbReference>
<dbReference type="Pfam" id="PF00825">
    <property type="entry name" value="Ribonuclease_P"/>
    <property type="match status" value="1"/>
</dbReference>
<dbReference type="SUPFAM" id="SSF54211">
    <property type="entry name" value="Ribosomal protein S5 domain 2-like"/>
    <property type="match status" value="1"/>
</dbReference>
<dbReference type="PROSITE" id="PS00648">
    <property type="entry name" value="RIBONUCLEASE_P"/>
    <property type="match status" value="1"/>
</dbReference>
<gene>
    <name evidence="1" type="primary">rnpA</name>
    <name type="ordered locus">SYNAS_11420</name>
    <name type="ORF">SYN_01012</name>
</gene>
<accession>Q2LSG2</accession>
<feature type="chain" id="PRO_1000021483" description="Ribonuclease P protein component">
    <location>
        <begin position="1"/>
        <end position="119"/>
    </location>
</feature>
<sequence length="119" mass="14058">MKKLTLKKSERIRKRRSYLQIYQHGKRSFTKHFTIVVSENDLDFPRLGMTVTKKIGNAVKRNRIKRLIREFFRLNKDRFKASQDIVIIAKGNTSSMKYADVCRELGVLLTKEPQNITQE</sequence>
<reference key="1">
    <citation type="journal article" date="2007" name="Proc. Natl. Acad. Sci. U.S.A.">
        <title>The genome of Syntrophus aciditrophicus: life at the thermodynamic limit of microbial growth.</title>
        <authorList>
            <person name="McInerney M.J."/>
            <person name="Rohlin L."/>
            <person name="Mouttaki H."/>
            <person name="Kim U."/>
            <person name="Krupp R.S."/>
            <person name="Rios-Hernandez L."/>
            <person name="Sieber J."/>
            <person name="Struchtemeyer C.G."/>
            <person name="Bhattacharyya A."/>
            <person name="Campbell J.W."/>
            <person name="Gunsalus R.P."/>
        </authorList>
    </citation>
    <scope>NUCLEOTIDE SEQUENCE [LARGE SCALE GENOMIC DNA]</scope>
    <source>
        <strain>SB</strain>
    </source>
</reference>
<proteinExistence type="inferred from homology"/>
<protein>
    <recommendedName>
        <fullName evidence="1">Ribonuclease P protein component</fullName>
        <shortName evidence="1">RNase P protein</shortName>
        <shortName evidence="1">RNaseP protein</shortName>
        <ecNumber evidence="1">3.1.26.5</ecNumber>
    </recommendedName>
    <alternativeName>
        <fullName evidence="1">Protein C5</fullName>
    </alternativeName>
</protein>
<comment type="function">
    <text evidence="1">RNaseP catalyzes the removal of the 5'-leader sequence from pre-tRNA to produce the mature 5'-terminus. It can also cleave other RNA substrates such as 4.5S RNA. The protein component plays an auxiliary but essential role in vivo by binding to the 5'-leader sequence and broadening the substrate specificity of the ribozyme.</text>
</comment>
<comment type="catalytic activity">
    <reaction evidence="1">
        <text>Endonucleolytic cleavage of RNA, removing 5'-extranucleotides from tRNA precursor.</text>
        <dbReference type="EC" id="3.1.26.5"/>
    </reaction>
</comment>
<comment type="subunit">
    <text evidence="1">Consists of a catalytic RNA component (M1 or rnpB) and a protein subunit.</text>
</comment>
<comment type="similarity">
    <text evidence="1">Belongs to the RnpA family.</text>
</comment>
<name>RNPA_SYNAS</name>
<keyword id="KW-0255">Endonuclease</keyword>
<keyword id="KW-0378">Hydrolase</keyword>
<keyword id="KW-0540">Nuclease</keyword>
<keyword id="KW-1185">Reference proteome</keyword>
<keyword id="KW-0694">RNA-binding</keyword>
<keyword id="KW-0819">tRNA processing</keyword>
<evidence type="ECO:0000255" key="1">
    <source>
        <dbReference type="HAMAP-Rule" id="MF_00227"/>
    </source>
</evidence>